<reference key="1">
    <citation type="journal article" date="1996" name="Yeast">
        <title>Sequence analysis of a 14.2 kb fragment of Saccharomyces cerevisiae chromosome XIV that includes the ypt53, tRNALeu and gsr m2 genes and four new open reading frames.</title>
        <authorList>
            <person name="Garcia-Cantalejo J.M."/>
            <person name="Boskovic J."/>
            <person name="Jimenez A."/>
        </authorList>
    </citation>
    <scope>NUCLEOTIDE SEQUENCE [GENOMIC DNA]</scope>
    <source>
        <strain>ATCC 96604 / S288c / FY1679</strain>
    </source>
</reference>
<reference key="2">
    <citation type="journal article" date="1997" name="Nature">
        <title>The nucleotide sequence of Saccharomyces cerevisiae chromosome XIV and its evolutionary implications.</title>
        <authorList>
            <person name="Philippsen P."/>
            <person name="Kleine K."/>
            <person name="Poehlmann R."/>
            <person name="Duesterhoeft A."/>
            <person name="Hamberg K."/>
            <person name="Hegemann J.H."/>
            <person name="Obermaier B."/>
            <person name="Urrestarazu L.A."/>
            <person name="Aert R."/>
            <person name="Albermann K."/>
            <person name="Altmann R."/>
            <person name="Andre B."/>
            <person name="Baladron V."/>
            <person name="Ballesta J.P.G."/>
            <person name="Becam A.-M."/>
            <person name="Beinhauer J.D."/>
            <person name="Boskovic J."/>
            <person name="Buitrago M.J."/>
            <person name="Bussereau F."/>
            <person name="Coster F."/>
            <person name="Crouzet M."/>
            <person name="D'Angelo M."/>
            <person name="Dal Pero F."/>
            <person name="De Antoni A."/>
            <person name="del Rey F."/>
            <person name="Doignon F."/>
            <person name="Domdey H."/>
            <person name="Dubois E."/>
            <person name="Fiedler T.A."/>
            <person name="Fleig U."/>
            <person name="Floeth M."/>
            <person name="Fritz C."/>
            <person name="Gaillardin C."/>
            <person name="Garcia-Cantalejo J.M."/>
            <person name="Glansdorff N."/>
            <person name="Goffeau A."/>
            <person name="Gueldener U."/>
            <person name="Herbert C.J."/>
            <person name="Heumann K."/>
            <person name="Heuss-Neitzel D."/>
            <person name="Hilbert H."/>
            <person name="Hinni K."/>
            <person name="Iraqui Houssaini I."/>
            <person name="Jacquet M."/>
            <person name="Jimenez A."/>
            <person name="Jonniaux J.-L."/>
            <person name="Karpfinger-Hartl L."/>
            <person name="Lanfranchi G."/>
            <person name="Lepingle A."/>
            <person name="Levesque H."/>
            <person name="Lyck R."/>
            <person name="Maftahi M."/>
            <person name="Mallet L."/>
            <person name="Maurer C.T.C."/>
            <person name="Messenguy F."/>
            <person name="Mewes H.-W."/>
            <person name="Moestl D."/>
            <person name="Nasr F."/>
            <person name="Nicaud J.-M."/>
            <person name="Niedenthal R.K."/>
            <person name="Pandolfo D."/>
            <person name="Pierard A."/>
            <person name="Piravandi E."/>
            <person name="Planta R.J."/>
            <person name="Pohl T.M."/>
            <person name="Purnelle B."/>
            <person name="Rebischung C."/>
            <person name="Remacha M.A."/>
            <person name="Revuelta J.L."/>
            <person name="Rinke M."/>
            <person name="Saiz J.E."/>
            <person name="Sartorello F."/>
            <person name="Scherens B."/>
            <person name="Sen-Gupta M."/>
            <person name="Soler-Mira A."/>
            <person name="Urbanus J.H.M."/>
            <person name="Valle G."/>
            <person name="Van Dyck L."/>
            <person name="Verhasselt P."/>
            <person name="Vierendeels F."/>
            <person name="Vissers S."/>
            <person name="Voet M."/>
            <person name="Volckaert G."/>
            <person name="Wach A."/>
            <person name="Wambutt R."/>
            <person name="Wedler H."/>
            <person name="Zollner A."/>
            <person name="Hani J."/>
        </authorList>
    </citation>
    <scope>NUCLEOTIDE SEQUENCE [LARGE SCALE GENOMIC DNA]</scope>
    <source>
        <strain>ATCC 204508 / S288c</strain>
    </source>
</reference>
<reference key="3">
    <citation type="journal article" date="2014" name="G3 (Bethesda)">
        <title>The reference genome sequence of Saccharomyces cerevisiae: Then and now.</title>
        <authorList>
            <person name="Engel S.R."/>
            <person name="Dietrich F.S."/>
            <person name="Fisk D.G."/>
            <person name="Binkley G."/>
            <person name="Balakrishnan R."/>
            <person name="Costanzo M.C."/>
            <person name="Dwight S.S."/>
            <person name="Hitz B.C."/>
            <person name="Karra K."/>
            <person name="Nash R.S."/>
            <person name="Weng S."/>
            <person name="Wong E.D."/>
            <person name="Lloyd P."/>
            <person name="Skrzypek M.S."/>
            <person name="Miyasato S.R."/>
            <person name="Simison M."/>
            <person name="Cherry J.M."/>
        </authorList>
    </citation>
    <scope>GENOME REANNOTATION</scope>
    <source>
        <strain>ATCC 204508 / S288c</strain>
    </source>
</reference>
<reference key="4">
    <citation type="journal article" date="1998" name="Yeast">
        <title>The list of cytoplasmic ribosomal proteins of Saccharomyces cerevisiae.</title>
        <authorList>
            <person name="Planta R.J."/>
            <person name="Mager W.H."/>
        </authorList>
    </citation>
    <scope>NOMENCLATURE</scope>
    <scope>SUBUNIT</scope>
</reference>
<reference key="5">
    <citation type="journal article" date="1999" name="J. Biol. Chem.">
        <title>The action of N-terminal acetyltransferases on yeast ribosomal proteins.</title>
        <authorList>
            <person name="Arnold R.J."/>
            <person name="Polevoda B."/>
            <person name="Reilly J.P."/>
            <person name="Sherman F."/>
        </authorList>
    </citation>
    <scope>CLEAVAGE OF INITIATOR METHIONINE</scope>
    <scope>ACETYLATION AT SER-2 BY NATA</scope>
</reference>
<reference key="6">
    <citation type="journal article" date="2003" name="Nature">
        <title>Global analysis of protein localization in budding yeast.</title>
        <authorList>
            <person name="Huh W.-K."/>
            <person name="Falvo J.V."/>
            <person name="Gerke L.C."/>
            <person name="Carroll A.S."/>
            <person name="Howson R.W."/>
            <person name="Weissman J.S."/>
            <person name="O'Shea E.K."/>
        </authorList>
    </citation>
    <scope>SUBCELLULAR LOCATION [LARGE SCALE ANALYSIS]</scope>
</reference>
<reference key="7">
    <citation type="journal article" date="2003" name="Nature">
        <title>Global analysis of protein expression in yeast.</title>
        <authorList>
            <person name="Ghaemmaghami S."/>
            <person name="Huh W.-K."/>
            <person name="Bower K."/>
            <person name="Howson R.W."/>
            <person name="Belle A."/>
            <person name="Dephoure N."/>
            <person name="O'Shea E.K."/>
            <person name="Weissman J.S."/>
        </authorList>
    </citation>
    <scope>LEVEL OF PROTEIN EXPRESSION [LARGE SCALE ANALYSIS]</scope>
</reference>
<reference key="8">
    <citation type="journal article" date="2004" name="Eukaryot. Cell">
        <title>The small-subunit processome is a ribosome assembly intermediate.</title>
        <authorList>
            <person name="Bernstein K.A."/>
            <person name="Gallagher J.E.G."/>
            <person name="Mitchell B.M."/>
            <person name="Granneman S."/>
            <person name="Baserga S.J."/>
        </authorList>
    </citation>
    <scope>FUNCTION</scope>
    <scope>INTERACTION WITH MPP10 AND SNORNA U3</scope>
    <scope>IDENTIFICATION IN SSU PROCESSOME</scope>
    <scope>SUBCELLULAR LOCATION</scope>
</reference>
<reference key="9">
    <citation type="journal article" date="2007" name="J. Proteome Res.">
        <title>Large-scale phosphorylation analysis of alpha-factor-arrested Saccharomyces cerevisiae.</title>
        <authorList>
            <person name="Li X."/>
            <person name="Gerber S.A."/>
            <person name="Rudner A.D."/>
            <person name="Beausoleil S.A."/>
            <person name="Haas W."/>
            <person name="Villen J."/>
            <person name="Elias J.E."/>
            <person name="Gygi S.P."/>
        </authorList>
    </citation>
    <scope>PHOSPHORYLATION [LARGE SCALE ANALYSIS] AT SER-31</scope>
    <scope>IDENTIFICATION BY MASS SPECTROMETRY [LARGE SCALE ANALYSIS]</scope>
    <source>
        <strain>ADR376</strain>
    </source>
</reference>
<reference key="10">
    <citation type="journal article" date="2008" name="Mol. Cell. Proteomics">
        <title>A multidimensional chromatography technology for in-depth phosphoproteome analysis.</title>
        <authorList>
            <person name="Albuquerque C.P."/>
            <person name="Smolka M.B."/>
            <person name="Payne S.H."/>
            <person name="Bafna V."/>
            <person name="Eng J."/>
            <person name="Zhou H."/>
        </authorList>
    </citation>
    <scope>PHOSPHORYLATION [LARGE SCALE ANALYSIS] AT SER-10</scope>
    <scope>IDENTIFICATION BY MASS SPECTROMETRY [LARGE SCALE ANALYSIS]</scope>
</reference>
<reference key="11">
    <citation type="journal article" date="2009" name="Science">
        <title>Global analysis of Cdk1 substrate phosphorylation sites provides insights into evolution.</title>
        <authorList>
            <person name="Holt L.J."/>
            <person name="Tuch B.B."/>
            <person name="Villen J."/>
            <person name="Johnson A.D."/>
            <person name="Gygi S.P."/>
            <person name="Morgan D.O."/>
        </authorList>
    </citation>
    <scope>PHOSPHORYLATION [LARGE SCALE ANALYSIS] AT SER-10 AND SER-31</scope>
    <scope>IDENTIFICATION BY MASS SPECTROMETRY [LARGE SCALE ANALYSIS]</scope>
</reference>
<reference key="12">
    <citation type="journal article" date="2011" name="Science">
        <title>The structure of the eukaryotic ribosome at 3.0 A resolution.</title>
        <authorList>
            <person name="Ben-Shem A."/>
            <person name="Garreau de Loubresse N."/>
            <person name="Melnikov S."/>
            <person name="Jenner L."/>
            <person name="Yusupova G."/>
            <person name="Yusupov M."/>
        </authorList>
    </citation>
    <scope>SUBUNIT</scope>
    <scope>SUBCELLULAR LOCATION</scope>
</reference>
<reference key="13">
    <citation type="journal article" date="2014" name="Curr. Opin. Struct. Biol.">
        <title>A new system for naming ribosomal proteins.</title>
        <authorList>
            <person name="Ban N."/>
            <person name="Beckmann R."/>
            <person name="Cate J.H.D."/>
            <person name="Dinman J.D."/>
            <person name="Dragon F."/>
            <person name="Ellis S.R."/>
            <person name="Lafontaine D.L.J."/>
            <person name="Lindahl L."/>
            <person name="Liljas A."/>
            <person name="Lipton J.M."/>
            <person name="McAlear M.A."/>
            <person name="Moore P.B."/>
            <person name="Noller H.F."/>
            <person name="Ortega J."/>
            <person name="Panse V.G."/>
            <person name="Ramakrishnan V."/>
            <person name="Spahn C.M.T."/>
            <person name="Steitz T.A."/>
            <person name="Tchorzewski M."/>
            <person name="Tollervey D."/>
            <person name="Warren A.J."/>
            <person name="Williamson J.R."/>
            <person name="Wilson D."/>
            <person name="Yonath A."/>
            <person name="Yusupov M."/>
        </authorList>
    </citation>
    <scope>NOMENCLATURE</scope>
</reference>
<reference key="14">
    <citation type="journal article" date="2019" name="EMBO J.">
        <title>Collided ribosomes form a unique structural interface to induce Hel2-driven quality control pathways.</title>
        <authorList>
            <person name="Ikeuchi K."/>
            <person name="Tesina P."/>
            <person name="Matsuo Y."/>
            <person name="Sugiyama T."/>
            <person name="Cheng J."/>
            <person name="Saeki Y."/>
            <person name="Tanaka K."/>
            <person name="Becker T."/>
            <person name="Beckmann R."/>
            <person name="Inada T."/>
        </authorList>
    </citation>
    <scope>UBIQUITINATION AT LYS-83 AND LYS-84</scope>
</reference>
<evidence type="ECO:0000269" key="1">
    <source>
    </source>
</evidence>
<evidence type="ECO:0000269" key="2">
    <source>
    </source>
</evidence>
<evidence type="ECO:0000269" key="3">
    <source>
    </source>
</evidence>
<evidence type="ECO:0000269" key="4">
    <source>
    </source>
</evidence>
<evidence type="ECO:0000269" key="5">
    <source>
    </source>
</evidence>
<evidence type="ECO:0000303" key="6">
    <source>
    </source>
</evidence>
<evidence type="ECO:0000303" key="7">
    <source>
    </source>
</evidence>
<evidence type="ECO:0000305" key="8"/>
<evidence type="ECO:0000305" key="9">
    <source>
    </source>
</evidence>
<evidence type="ECO:0000305" key="10">
    <source>
    </source>
</evidence>
<evidence type="ECO:0007744" key="11">
    <source>
    </source>
</evidence>
<evidence type="ECO:0007744" key="12">
    <source>
    </source>
</evidence>
<evidence type="ECO:0007744" key="13">
    <source>
    </source>
</evidence>
<accession>P48164</accession>
<accession>D6W184</accession>
<sequence>MSSVQSKILSQAPSELELQVAKTFIDLESSSPELKADLRPLQIKSIREIDVTGGKKALVLFVPVPALSAYHKVQTKLTRELEKKFPDRHVIFLAERRILPKPSRTSRQVQKRPRSRTLTAVHDKVLEDMVFPTEIVGKRVRYLVGGNKIQKVLLDSKDVQQIDYKLESFQAVYNKLTGKQIVFEIPSQTN</sequence>
<proteinExistence type="evidence at protein level"/>
<dbReference type="EMBL" id="X85811">
    <property type="protein sequence ID" value="CAA59821.1"/>
    <property type="molecule type" value="Genomic_DNA"/>
</dbReference>
<dbReference type="EMBL" id="Z71372">
    <property type="protein sequence ID" value="CAA95972.1"/>
    <property type="molecule type" value="Genomic_DNA"/>
</dbReference>
<dbReference type="EMBL" id="BK006947">
    <property type="protein sequence ID" value="DAA10450.1"/>
    <property type="molecule type" value="Genomic_DNA"/>
</dbReference>
<dbReference type="PIR" id="S52729">
    <property type="entry name" value="S52729"/>
</dbReference>
<dbReference type="RefSeq" id="NP_014303.3">
    <property type="nucleotide sequence ID" value="NM_001182934.3"/>
</dbReference>
<dbReference type="SMR" id="P48164"/>
<dbReference type="BioGRID" id="35728">
    <property type="interactions" value="281"/>
</dbReference>
<dbReference type="ComplexPortal" id="CPX-1599">
    <property type="entry name" value="40S cytosolic small ribosomal subunit"/>
</dbReference>
<dbReference type="DIP" id="DIP-3841N"/>
<dbReference type="FunCoup" id="P48164">
    <property type="interactions" value="1219"/>
</dbReference>
<dbReference type="IntAct" id="P48164">
    <property type="interactions" value="85"/>
</dbReference>
<dbReference type="MINT" id="P48164"/>
<dbReference type="STRING" id="4932.YNL096C"/>
<dbReference type="iPTMnet" id="P48164"/>
<dbReference type="PaxDb" id="4932-YNL096C"/>
<dbReference type="PeptideAtlas" id="P48164"/>
<dbReference type="EnsemblFungi" id="YNL096C_mRNA">
    <property type="protein sequence ID" value="YNL096C"/>
    <property type="gene ID" value="YNL096C"/>
</dbReference>
<dbReference type="GeneID" id="855628"/>
<dbReference type="KEGG" id="sce:YNL096C"/>
<dbReference type="AGR" id="SGD:S000005040"/>
<dbReference type="SGD" id="S000005040">
    <property type="gene designation" value="RPS7B"/>
</dbReference>
<dbReference type="VEuPathDB" id="FungiDB:YNL096C"/>
<dbReference type="eggNOG" id="KOG3320">
    <property type="taxonomic scope" value="Eukaryota"/>
</dbReference>
<dbReference type="GeneTree" id="ENSGT00390000014122"/>
<dbReference type="HOGENOM" id="CLU_088621_1_2_1"/>
<dbReference type="InParanoid" id="P48164"/>
<dbReference type="OMA" id="SGQNKIH"/>
<dbReference type="OrthoDB" id="1724687at2759"/>
<dbReference type="BioCyc" id="YEAST:G3O-33124-MONOMER"/>
<dbReference type="BioGRID-ORCS" id="855628">
    <property type="hits" value="0 hits in 10 CRISPR screens"/>
</dbReference>
<dbReference type="PRO" id="PR:P48164"/>
<dbReference type="Proteomes" id="UP000002311">
    <property type="component" value="Chromosome XIV"/>
</dbReference>
<dbReference type="RNAct" id="P48164">
    <property type="molecule type" value="protein"/>
</dbReference>
<dbReference type="GO" id="GO:0005829">
    <property type="term" value="C:cytosol"/>
    <property type="evidence" value="ECO:0000304"/>
    <property type="project" value="Reactome"/>
</dbReference>
<dbReference type="GO" id="GO:0022627">
    <property type="term" value="C:cytosolic small ribosomal subunit"/>
    <property type="evidence" value="ECO:0000318"/>
    <property type="project" value="GO_Central"/>
</dbReference>
<dbReference type="GO" id="GO:0005730">
    <property type="term" value="C:nucleolus"/>
    <property type="evidence" value="ECO:0007669"/>
    <property type="project" value="UniProtKB-SubCell"/>
</dbReference>
<dbReference type="GO" id="GO:0032040">
    <property type="term" value="C:small-subunit processome"/>
    <property type="evidence" value="ECO:0000314"/>
    <property type="project" value="SGD"/>
</dbReference>
<dbReference type="GO" id="GO:0003735">
    <property type="term" value="F:structural constituent of ribosome"/>
    <property type="evidence" value="ECO:0000303"/>
    <property type="project" value="SGD"/>
</dbReference>
<dbReference type="GO" id="GO:0002181">
    <property type="term" value="P:cytoplasmic translation"/>
    <property type="evidence" value="ECO:0000303"/>
    <property type="project" value="SGD"/>
</dbReference>
<dbReference type="GO" id="GO:0042274">
    <property type="term" value="P:ribosomal small subunit biogenesis"/>
    <property type="evidence" value="ECO:0000318"/>
    <property type="project" value="GO_Central"/>
</dbReference>
<dbReference type="GO" id="GO:0042254">
    <property type="term" value="P:ribosome biogenesis"/>
    <property type="evidence" value="ECO:0000316"/>
    <property type="project" value="SGD"/>
</dbReference>
<dbReference type="GO" id="GO:0006364">
    <property type="term" value="P:rRNA processing"/>
    <property type="evidence" value="ECO:0000318"/>
    <property type="project" value="GO_Central"/>
</dbReference>
<dbReference type="InterPro" id="IPR000554">
    <property type="entry name" value="Ribosomal_eS7"/>
</dbReference>
<dbReference type="InterPro" id="IPR047861">
    <property type="entry name" value="Ribosomal_eS7_CS"/>
</dbReference>
<dbReference type="PANTHER" id="PTHR11278">
    <property type="entry name" value="40S RIBOSOMAL PROTEIN S7"/>
    <property type="match status" value="1"/>
</dbReference>
<dbReference type="PANTHER" id="PTHR11278:SF0">
    <property type="entry name" value="SMALL RIBOSOMAL SUBUNIT PROTEIN ES7"/>
    <property type="match status" value="1"/>
</dbReference>
<dbReference type="Pfam" id="PF01251">
    <property type="entry name" value="Ribosomal_S7e"/>
    <property type="match status" value="1"/>
</dbReference>
<dbReference type="PROSITE" id="PS00948">
    <property type="entry name" value="RIBOSOMAL_S7E"/>
    <property type="match status" value="1"/>
</dbReference>
<protein>
    <recommendedName>
        <fullName evidence="6">Small ribosomal subunit protein eS7B</fullName>
    </recommendedName>
    <alternativeName>
        <fullName evidence="7">40S ribosomal protein S7-B</fullName>
    </alternativeName>
</protein>
<keyword id="KW-0007">Acetylation</keyword>
<keyword id="KW-0963">Cytoplasm</keyword>
<keyword id="KW-1017">Isopeptide bond</keyword>
<keyword id="KW-0539">Nucleus</keyword>
<keyword id="KW-0597">Phosphoprotein</keyword>
<keyword id="KW-1185">Reference proteome</keyword>
<keyword id="KW-0687">Ribonucleoprotein</keyword>
<keyword id="KW-0689">Ribosomal protein</keyword>
<keyword id="KW-0690">Ribosome biogenesis</keyword>
<keyword id="KW-0698">rRNA processing</keyword>
<keyword id="KW-0832">Ubl conjugation</keyword>
<gene>
    <name evidence="7" type="primary">RPS7B</name>
    <name type="ordered locus">YNL096C</name>
    <name type="ORF">N2212</name>
</gene>
<comment type="function">
    <text evidence="3 9">Component of the ribosome, a large ribonucleoprotein complex responsible for the synthesis of proteins in the cell. The small ribosomal subunit (SSU) binds messenger RNAs (mRNAs) and translates the encoded message by selecting cognate aminoacyl-transfer RNA (tRNA) molecules. The large subunit (LSU) contains the ribosomal catalytic site termed the peptidyl transferase center (PTC), which catalyzes the formation of peptide bonds, thereby polymerizing the amino acids delivered by tRNAs into a polypeptide chain. The nascent polypeptides leave the ribosome through a tunnel in the LSU and interact with protein factors that function in enzymatic processing, targeting, and the membrane insertion of nascent chains at the exit of the ribosomal tunnel (PubMed:22096102). eS7 is involved in nucleolar processing of pre-18S ribosomal RNA and ribosome assembly (PubMed:15590835).</text>
</comment>
<comment type="subunit">
    <text evidence="3 4 10">Component of the small ribosomal subunit (SSU). Mature yeast ribosomes consist of a small (40S) and a large (60S) subunit. The 40S small subunit contains 1 molecule of ribosomal RNA (18S rRNA) and 33 different proteins (encoded by 57 genes). The large 60S subunit contains 3 rRNA molecules (25S, 5.8S and 5S rRNA) and 46 different proteins (encoded by 81 genes) (PubMed:22096102, PubMed:9559554). Interacts with snoRNA U3. uS11 interacts with MPP10. Component of the ribosomal small subunit (SSU) processome composed of at least 40 protein subunits and snoRNA U3 (PubMed:15590835).</text>
</comment>
<comment type="subcellular location">
    <subcellularLocation>
        <location evidence="4">Cytoplasm</location>
    </subcellularLocation>
    <subcellularLocation>
        <location evidence="3">Nucleus</location>
        <location evidence="3">Nucleolus</location>
    </subcellularLocation>
</comment>
<comment type="PTM">
    <text evidence="1">N-terminally acetylated by acetyltransferase NatA.</text>
</comment>
<comment type="PTM">
    <text evidence="5">Ubiquitinated at Lys-83 and Lys-84 in response to stalled ribosomes, leading to activation of the No-Go Decay (NGD) pathway: first monoubiquitinated by MOT2/NOT4, followed by formation by HEL2 of 'Lys-63'-linked polyubiquitin chains on monoubiquitin.</text>
</comment>
<comment type="miscellaneous">
    <text evidence="2">Present with 43500 molecules/cell in log phase SD medium.</text>
</comment>
<comment type="miscellaneous">
    <text evidence="8">There are 2 genes for eS7 in yeast.</text>
</comment>
<comment type="similarity">
    <text evidence="8">Belongs to the eukaryotic ribosomal protein eS7 family.</text>
</comment>
<name>RS7B_YEAST</name>
<organism>
    <name type="scientific">Saccharomyces cerevisiae (strain ATCC 204508 / S288c)</name>
    <name type="common">Baker's yeast</name>
    <dbReference type="NCBI Taxonomy" id="559292"/>
    <lineage>
        <taxon>Eukaryota</taxon>
        <taxon>Fungi</taxon>
        <taxon>Dikarya</taxon>
        <taxon>Ascomycota</taxon>
        <taxon>Saccharomycotina</taxon>
        <taxon>Saccharomycetes</taxon>
        <taxon>Saccharomycetales</taxon>
        <taxon>Saccharomycetaceae</taxon>
        <taxon>Saccharomyces</taxon>
    </lineage>
</organism>
<feature type="initiator methionine" description="Removed" evidence="1">
    <location>
        <position position="1"/>
    </location>
</feature>
<feature type="chain" id="PRO_0000174213" description="Small ribosomal subunit protein eS7B">
    <location>
        <begin position="2"/>
        <end position="190"/>
    </location>
</feature>
<feature type="modified residue" description="N-acetylserine" evidence="1">
    <location>
        <position position="2"/>
    </location>
</feature>
<feature type="modified residue" description="Phosphoserine" evidence="12 13">
    <location>
        <position position="10"/>
    </location>
</feature>
<feature type="modified residue" description="Phosphoserine" evidence="11 13">
    <location>
        <position position="31"/>
    </location>
</feature>
<feature type="cross-link" description="Glycyl lysine isopeptide (Lys-Gly) (interchain with G-Cter in ubiquitin)" evidence="5">
    <location>
        <position position="83"/>
    </location>
</feature>
<feature type="cross-link" description="Glycyl lysine isopeptide (Lys-Gly) (interchain with G-Cter in ubiquitin)" evidence="5">
    <location>
        <position position="84"/>
    </location>
</feature>